<keyword id="KW-0113">Calvin cycle</keyword>
<keyword id="KW-0120">Carbon dioxide fixation</keyword>
<keyword id="KW-0150">Chloroplast</keyword>
<keyword id="KW-0601">Photorespiration</keyword>
<keyword id="KW-0602">Photosynthesis</keyword>
<keyword id="KW-0934">Plastid</keyword>
<keyword id="KW-1185">Reference proteome</keyword>
<keyword id="KW-0809">Transit peptide</keyword>
<dbReference type="EMBL" id="V00458">
    <property type="protein sequence ID" value="CAA23736.1"/>
    <property type="molecule type" value="Genomic_DNA"/>
</dbReference>
<dbReference type="PIR" id="A01084">
    <property type="entry name" value="RKSYS"/>
</dbReference>
<dbReference type="FunCoup" id="P00865">
    <property type="interactions" value="2629"/>
</dbReference>
<dbReference type="STRING" id="3847.P00865"/>
<dbReference type="PaxDb" id="3847-GLYMA13G07610.1"/>
<dbReference type="eggNOG" id="ENOG502QT0M">
    <property type="taxonomic scope" value="Eukaryota"/>
</dbReference>
<dbReference type="InParanoid" id="P00865"/>
<dbReference type="Proteomes" id="UP000008827">
    <property type="component" value="Unplaced"/>
</dbReference>
<dbReference type="GO" id="GO:0009507">
    <property type="term" value="C:chloroplast"/>
    <property type="evidence" value="ECO:0007669"/>
    <property type="project" value="UniProtKB-SubCell"/>
</dbReference>
<dbReference type="GO" id="GO:0016984">
    <property type="term" value="F:ribulose-bisphosphate carboxylase activity"/>
    <property type="evidence" value="ECO:0007669"/>
    <property type="project" value="UniProtKB-UniRule"/>
</dbReference>
<dbReference type="GO" id="GO:0009853">
    <property type="term" value="P:photorespiration"/>
    <property type="evidence" value="ECO:0007669"/>
    <property type="project" value="UniProtKB-KW"/>
</dbReference>
<dbReference type="GO" id="GO:0019253">
    <property type="term" value="P:reductive pentose-phosphate cycle"/>
    <property type="evidence" value="ECO:0007669"/>
    <property type="project" value="UniProtKB-UniRule"/>
</dbReference>
<dbReference type="CDD" id="cd03527">
    <property type="entry name" value="RuBisCO_small"/>
    <property type="match status" value="1"/>
</dbReference>
<dbReference type="FunFam" id="3.30.190.10:FF:000001">
    <property type="entry name" value="Ribulose bisphosphate carboxylase small chain, chloroplastic"/>
    <property type="match status" value="1"/>
</dbReference>
<dbReference type="Gene3D" id="3.30.190.10">
    <property type="entry name" value="Ribulose bisphosphate carboxylase, small subunit"/>
    <property type="match status" value="1"/>
</dbReference>
<dbReference type="HAMAP" id="MF_00859">
    <property type="entry name" value="RuBisCO_S_bact"/>
    <property type="match status" value="1"/>
</dbReference>
<dbReference type="InterPro" id="IPR024681">
    <property type="entry name" value="RuBisCO_ssu"/>
</dbReference>
<dbReference type="InterPro" id="IPR000894">
    <property type="entry name" value="RuBisCO_ssu_dom"/>
</dbReference>
<dbReference type="InterPro" id="IPR024680">
    <property type="entry name" value="RuBisCO_ssu_N"/>
</dbReference>
<dbReference type="InterPro" id="IPR036385">
    <property type="entry name" value="RuBisCO_ssu_sf"/>
</dbReference>
<dbReference type="PANTHER" id="PTHR31262">
    <property type="entry name" value="RIBULOSE BISPHOSPHATE CARBOXYLASE SMALL CHAIN 1, CHLOROPLASTIC"/>
    <property type="match status" value="1"/>
</dbReference>
<dbReference type="PANTHER" id="PTHR31262:SF19">
    <property type="entry name" value="RIBULOSE BISPHOSPHATE CARBOXYLASE SMALL SUBUNIT, CHLOROPLASTIC 2"/>
    <property type="match status" value="1"/>
</dbReference>
<dbReference type="Pfam" id="PF12338">
    <property type="entry name" value="RbcS"/>
    <property type="match status" value="1"/>
</dbReference>
<dbReference type="Pfam" id="PF00101">
    <property type="entry name" value="RuBisCO_small"/>
    <property type="match status" value="1"/>
</dbReference>
<dbReference type="PRINTS" id="PR00152">
    <property type="entry name" value="RUBISCOSMALL"/>
</dbReference>
<dbReference type="SMART" id="SM00961">
    <property type="entry name" value="RuBisCO_small"/>
    <property type="match status" value="1"/>
</dbReference>
<dbReference type="SUPFAM" id="SSF55239">
    <property type="entry name" value="RuBisCO, small subunit"/>
    <property type="match status" value="1"/>
</dbReference>
<reference key="1">
    <citation type="journal article" date="1982" name="J. Mol. Appl. Genet.">
        <title>The nucleotide sequence, expression, and evolution of one member of a multigene family encoding the small subunit of ribulose-1,5-bisphosphate carboxylase in soybean.</title>
        <authorList>
            <person name="Berry-Lowe S.L."/>
            <person name="McKnight T.D."/>
            <person name="Shah D.M."/>
            <person name="Meagher R.B."/>
        </authorList>
    </citation>
    <scope>NUCLEOTIDE SEQUENCE [GENOMIC DNA]</scope>
    <source>
        <strain>cv. Wayne</strain>
    </source>
</reference>
<protein>
    <recommendedName>
        <fullName evidence="1">Ribulose bisphosphate carboxylase small subunit, chloroplastic 1</fullName>
        <shortName evidence="1">RuBisCO small subunit 1</shortName>
    </recommendedName>
</protein>
<comment type="function">
    <text evidence="1">RuBisCO catalyzes two reactions: the carboxylation of D-ribulose 1,5-bisphosphate, the primary event in carbon dioxide fixation, as well as the oxidative fragmentation of the pentose substrate. Both reactions occur simultaneously and in competition at the same active site. Although the small subunit is not catalytic it is essential for maximal activity.</text>
</comment>
<comment type="subunit">
    <text evidence="1">Heterohexadecamer of 8 large and 8 small subunits.</text>
</comment>
<comment type="subcellular location">
    <subcellularLocation>
        <location evidence="1">Plastid</location>
        <location evidence="1">Chloroplast</location>
    </subcellularLocation>
</comment>
<comment type="miscellaneous">
    <text evidence="1">The basic functional RuBisCO is composed of a large chain homodimer in a 'head-to-tail' conformation. In form I RuBisCO this homodimer is arranged in a barrel-like tetramer with the small subunits forming a tetrameric 'cap' on each end of the 'barrel'.</text>
</comment>
<comment type="similarity">
    <text evidence="1">Belongs to the RuBisCO small chain family.</text>
</comment>
<sequence>MASSMISSPAVTTVNRAGAGMVAPFTGLKSMAGFPTRKTNNDITSIASNGGRVQCMQVWPPIGKKKFETLSYLPDLDDAQLAKEVEYLLRKGWIPCLEFELEHGFVYREHNRSPXYYDGRYWTMWKLPMFGCTDASQVLKELQEAKTAYPNGFIRIIGFDNVRQVQCISFIAYKPPGF</sequence>
<gene>
    <name evidence="1" type="primary">RBCS1</name>
    <name type="synonym">RBCS-1</name>
    <name type="synonym">SRS1</name>
</gene>
<feature type="transit peptide" description="Chloroplast" evidence="1">
    <location>
        <begin position="1"/>
        <end position="54"/>
    </location>
</feature>
<feature type="chain" id="PRO_0000031556" description="Ribulose bisphosphate carboxylase small subunit, chloroplastic 1" evidence="1">
    <location>
        <begin position="55"/>
        <end position="178"/>
    </location>
</feature>
<accession>P00865</accession>
<evidence type="ECO:0000255" key="1">
    <source>
        <dbReference type="HAMAP-Rule" id="MF_00860"/>
    </source>
</evidence>
<name>RBS1_SOYBN</name>
<proteinExistence type="inferred from homology"/>
<organism>
    <name type="scientific">Glycine max</name>
    <name type="common">Soybean</name>
    <name type="synonym">Glycine hispida</name>
    <dbReference type="NCBI Taxonomy" id="3847"/>
    <lineage>
        <taxon>Eukaryota</taxon>
        <taxon>Viridiplantae</taxon>
        <taxon>Streptophyta</taxon>
        <taxon>Embryophyta</taxon>
        <taxon>Tracheophyta</taxon>
        <taxon>Spermatophyta</taxon>
        <taxon>Magnoliopsida</taxon>
        <taxon>eudicotyledons</taxon>
        <taxon>Gunneridae</taxon>
        <taxon>Pentapetalae</taxon>
        <taxon>rosids</taxon>
        <taxon>fabids</taxon>
        <taxon>Fabales</taxon>
        <taxon>Fabaceae</taxon>
        <taxon>Papilionoideae</taxon>
        <taxon>50 kb inversion clade</taxon>
        <taxon>NPAAA clade</taxon>
        <taxon>indigoferoid/millettioid clade</taxon>
        <taxon>Phaseoleae</taxon>
        <taxon>Glycine</taxon>
        <taxon>Glycine subgen. Soja</taxon>
    </lineage>
</organism>